<organism>
    <name type="scientific">Corynebacterium glutamicum (strain ATCC 13032 / DSM 20300 / JCM 1318 / BCRC 11384 / CCUG 27702 / LMG 3730 / NBRC 12168 / NCIMB 10025 / NRRL B-2784 / 534)</name>
    <dbReference type="NCBI Taxonomy" id="196627"/>
    <lineage>
        <taxon>Bacteria</taxon>
        <taxon>Bacillati</taxon>
        <taxon>Actinomycetota</taxon>
        <taxon>Actinomycetes</taxon>
        <taxon>Mycobacteriales</taxon>
        <taxon>Corynebacteriaceae</taxon>
        <taxon>Corynebacterium</taxon>
    </lineage>
</organism>
<comment type="function">
    <text evidence="1">Iron-binding repressor of the dipheteria toxin gene expression. May serve as a global regulator of gene expression (By similarity). Represses ripA under iron excess.</text>
</comment>
<comment type="subunit">
    <text evidence="1">Homodimer.</text>
</comment>
<comment type="subcellular location">
    <subcellularLocation>
        <location>Cytoplasm</location>
    </subcellularLocation>
</comment>
<comment type="similarity">
    <text evidence="3">Belongs to the DtxR/MntR family.</text>
</comment>
<gene>
    <name type="primary">dtxR</name>
    <name type="ordered locus">Cgl1920</name>
    <name type="ordered locus">cg2103</name>
</gene>
<evidence type="ECO:0000250" key="1"/>
<evidence type="ECO:0000255" key="2">
    <source>
        <dbReference type="PROSITE-ProRule" id="PRU00296"/>
    </source>
</evidence>
<evidence type="ECO:0000305" key="3"/>
<protein>
    <recommendedName>
        <fullName>Diphtheria toxin repressor</fullName>
    </recommendedName>
    <alternativeName>
        <fullName>Iron-dependent diphtheria tox regulatory element</fullName>
    </alternativeName>
    <alternativeName>
        <fullName>Tox regulatory factor</fullName>
    </alternativeName>
</protein>
<reference key="1">
    <citation type="journal article" date="1995" name="J. Bacteriol.">
        <title>Molecular cloning, DNA sequence analysis, and characterization of the Corynebacterium diphtheriae dtxR homolog from Brevibacterium lactofermentum.</title>
        <authorList>
            <person name="Oguiza J.A."/>
            <person name="Tao X."/>
            <person name="Marcos A.T."/>
            <person name="Martin J.F."/>
            <person name="Murphy J.R."/>
        </authorList>
    </citation>
    <scope>NUCLEOTIDE SEQUENCE [GENOMIC DNA]</scope>
    <source>
        <strain>ATCC 13869 / DSMZ 1412 / NCIMB 9567</strain>
    </source>
</reference>
<reference key="2">
    <citation type="journal article" date="2003" name="Appl. Microbiol. Biotechnol.">
        <title>The Corynebacterium glutamicum genome: features and impacts on biotechnological processes.</title>
        <authorList>
            <person name="Ikeda M."/>
            <person name="Nakagawa S."/>
        </authorList>
    </citation>
    <scope>NUCLEOTIDE SEQUENCE [LARGE SCALE GENOMIC DNA]</scope>
    <source>
        <strain>ATCC 13032 / DSM 20300 / JCM 1318 / BCRC 11384 / CCUG 27702 / LMG 3730 / NBRC 12168 / NCIMB 10025 / NRRL B-2784 / 534</strain>
    </source>
</reference>
<reference key="3">
    <citation type="journal article" date="2003" name="J. Biotechnol.">
        <title>The complete Corynebacterium glutamicum ATCC 13032 genome sequence and its impact on the production of L-aspartate-derived amino acids and vitamins.</title>
        <authorList>
            <person name="Kalinowski J."/>
            <person name="Bathe B."/>
            <person name="Bartels D."/>
            <person name="Bischoff N."/>
            <person name="Bott M."/>
            <person name="Burkovski A."/>
            <person name="Dusch N."/>
            <person name="Eggeling L."/>
            <person name="Eikmanns B.J."/>
            <person name="Gaigalat L."/>
            <person name="Goesmann A."/>
            <person name="Hartmann M."/>
            <person name="Huthmacher K."/>
            <person name="Kraemer R."/>
            <person name="Linke B."/>
            <person name="McHardy A.C."/>
            <person name="Meyer F."/>
            <person name="Moeckel B."/>
            <person name="Pfefferle W."/>
            <person name="Puehler A."/>
            <person name="Rey D.A."/>
            <person name="Rueckert C."/>
            <person name="Rupp O."/>
            <person name="Sahm H."/>
            <person name="Wendisch V.F."/>
            <person name="Wiegraebe I."/>
            <person name="Tauch A."/>
        </authorList>
    </citation>
    <scope>NUCLEOTIDE SEQUENCE [LARGE SCALE GENOMIC DNA]</scope>
    <source>
        <strain>ATCC 13032 / DSM 20300 / JCM 1318 / BCRC 11384 / CCUG 27702 / LMG 3730 / NBRC 12168 / NCIMB 10025 / NRRL B-2784 / 534</strain>
    </source>
</reference>
<reference key="4">
    <citation type="journal article" date="2005" name="J. Biol. Chem.">
        <title>The AraC-type regulator RipA represses aconitase and other iron proteins from Corynebacterium under iron limitation and is itself repressed by DtxR.</title>
        <authorList>
            <person name="Wennerhold J."/>
            <person name="Krug A."/>
            <person name="Bott M."/>
        </authorList>
    </citation>
    <scope>REPRESSION OF RIPA</scope>
    <source>
        <strain>ATCC 13032 / DSM 20300 / JCM 1318 / BCRC 11384 / CCUG 27702 / LMG 3730 / NBRC 12168 / NCIMB 10025 / NRRL B-2784 / 534</strain>
    </source>
</reference>
<proteinExistence type="inferred from homology"/>
<keyword id="KW-0963">Cytoplasm</keyword>
<keyword id="KW-0238">DNA-binding</keyword>
<keyword id="KW-0408">Iron</keyword>
<keyword id="KW-1185">Reference proteome</keyword>
<keyword id="KW-0678">Repressor</keyword>
<keyword id="KW-0804">Transcription</keyword>
<keyword id="KW-0805">Transcription regulation</keyword>
<dbReference type="EMBL" id="L35906">
    <property type="protein sequence ID" value="AAA91345.1"/>
    <property type="molecule type" value="Genomic_DNA"/>
</dbReference>
<dbReference type="EMBL" id="BA000036">
    <property type="protein sequence ID" value="BAB99313.1"/>
    <property type="molecule type" value="Genomic_DNA"/>
</dbReference>
<dbReference type="EMBL" id="BX927153">
    <property type="protein sequence ID" value="CAF20261.1"/>
    <property type="molecule type" value="Genomic_DNA"/>
</dbReference>
<dbReference type="PIR" id="I40339">
    <property type="entry name" value="I40339"/>
</dbReference>
<dbReference type="RefSeq" id="NP_601126.1">
    <property type="nucleotide sequence ID" value="NC_003450.3"/>
</dbReference>
<dbReference type="RefSeq" id="WP_011014753.1">
    <property type="nucleotide sequence ID" value="NC_006958.1"/>
</dbReference>
<dbReference type="SMR" id="Q8NP95"/>
<dbReference type="STRING" id="196627.cg2103"/>
<dbReference type="KEGG" id="cgb:cg2103"/>
<dbReference type="KEGG" id="cgl:Cgl1920"/>
<dbReference type="PATRIC" id="fig|196627.13.peg.1858"/>
<dbReference type="eggNOG" id="COG1321">
    <property type="taxonomic scope" value="Bacteria"/>
</dbReference>
<dbReference type="HOGENOM" id="CLU_069532_0_0_11"/>
<dbReference type="OrthoDB" id="3208141at2"/>
<dbReference type="BioCyc" id="CORYNE:G18NG-11512-MONOMER"/>
<dbReference type="Proteomes" id="UP000000582">
    <property type="component" value="Chromosome"/>
</dbReference>
<dbReference type="Proteomes" id="UP000001009">
    <property type="component" value="Chromosome"/>
</dbReference>
<dbReference type="GO" id="GO:0005737">
    <property type="term" value="C:cytoplasm"/>
    <property type="evidence" value="ECO:0007669"/>
    <property type="project" value="UniProtKB-SubCell"/>
</dbReference>
<dbReference type="GO" id="GO:0003677">
    <property type="term" value="F:DNA binding"/>
    <property type="evidence" value="ECO:0007669"/>
    <property type="project" value="UniProtKB-KW"/>
</dbReference>
<dbReference type="GO" id="GO:0003700">
    <property type="term" value="F:DNA-binding transcription factor activity"/>
    <property type="evidence" value="ECO:0007669"/>
    <property type="project" value="InterPro"/>
</dbReference>
<dbReference type="GO" id="GO:0046983">
    <property type="term" value="F:protein dimerization activity"/>
    <property type="evidence" value="ECO:0007669"/>
    <property type="project" value="InterPro"/>
</dbReference>
<dbReference type="GO" id="GO:0046914">
    <property type="term" value="F:transition metal ion binding"/>
    <property type="evidence" value="ECO:0007669"/>
    <property type="project" value="InterPro"/>
</dbReference>
<dbReference type="GO" id="GO:0045892">
    <property type="term" value="P:negative regulation of DNA-templated transcription"/>
    <property type="evidence" value="ECO:0007669"/>
    <property type="project" value="TreeGrafter"/>
</dbReference>
<dbReference type="FunFam" id="1.10.60.10:FF:000001">
    <property type="entry name" value="Iron dependent repressor"/>
    <property type="match status" value="1"/>
</dbReference>
<dbReference type="FunFam" id="1.10.10.10:FF:000067">
    <property type="entry name" value="Iron-dependent repressor IdeR"/>
    <property type="match status" value="1"/>
</dbReference>
<dbReference type="Gene3D" id="2.30.30.90">
    <property type="match status" value="1"/>
</dbReference>
<dbReference type="Gene3D" id="1.10.60.10">
    <property type="entry name" value="Iron dependent repressor, metal binding and dimerisation domain"/>
    <property type="match status" value="1"/>
</dbReference>
<dbReference type="Gene3D" id="1.10.10.10">
    <property type="entry name" value="Winged helix-like DNA-binding domain superfamily/Winged helix DNA-binding domain"/>
    <property type="match status" value="1"/>
</dbReference>
<dbReference type="InterPro" id="IPR040767">
    <property type="entry name" value="DtxR/IdeR_SH3"/>
</dbReference>
<dbReference type="InterPro" id="IPR050536">
    <property type="entry name" value="DtxR_MntR_Metal-Reg"/>
</dbReference>
<dbReference type="InterPro" id="IPR007167">
    <property type="entry name" value="Fe-transptr_FeoA-like"/>
</dbReference>
<dbReference type="InterPro" id="IPR001367">
    <property type="entry name" value="Fe_dep_repressor"/>
</dbReference>
<dbReference type="InterPro" id="IPR036421">
    <property type="entry name" value="Fe_dep_repressor_sf"/>
</dbReference>
<dbReference type="InterPro" id="IPR038157">
    <property type="entry name" value="FeoA_core_dom"/>
</dbReference>
<dbReference type="InterPro" id="IPR022687">
    <property type="entry name" value="HTH_DTXR"/>
</dbReference>
<dbReference type="InterPro" id="IPR022689">
    <property type="entry name" value="Iron_dep_repressor"/>
</dbReference>
<dbReference type="InterPro" id="IPR008988">
    <property type="entry name" value="Transcriptional_repressor_C"/>
</dbReference>
<dbReference type="InterPro" id="IPR036388">
    <property type="entry name" value="WH-like_DNA-bd_sf"/>
</dbReference>
<dbReference type="InterPro" id="IPR036390">
    <property type="entry name" value="WH_DNA-bd_sf"/>
</dbReference>
<dbReference type="PANTHER" id="PTHR33238">
    <property type="entry name" value="IRON (METAL) DEPENDENT REPRESSOR, DTXR FAMILY"/>
    <property type="match status" value="1"/>
</dbReference>
<dbReference type="PANTHER" id="PTHR33238:SF10">
    <property type="entry name" value="IRON-DEPENDENT REPRESSOR IDER"/>
    <property type="match status" value="1"/>
</dbReference>
<dbReference type="Pfam" id="PF18357">
    <property type="entry name" value="DtxR"/>
    <property type="match status" value="1"/>
</dbReference>
<dbReference type="Pfam" id="PF02742">
    <property type="entry name" value="Fe_dep_repr_C"/>
    <property type="match status" value="1"/>
</dbReference>
<dbReference type="Pfam" id="PF01325">
    <property type="entry name" value="Fe_dep_repress"/>
    <property type="match status" value="1"/>
</dbReference>
<dbReference type="SMART" id="SM00899">
    <property type="entry name" value="FeoA"/>
    <property type="match status" value="1"/>
</dbReference>
<dbReference type="SMART" id="SM00529">
    <property type="entry name" value="HTH_DTXR"/>
    <property type="match status" value="1"/>
</dbReference>
<dbReference type="SUPFAM" id="SSF50037">
    <property type="entry name" value="C-terminal domain of transcriptional repressors"/>
    <property type="match status" value="1"/>
</dbReference>
<dbReference type="SUPFAM" id="SSF47979">
    <property type="entry name" value="Iron-dependent repressor protein, dimerization domain"/>
    <property type="match status" value="1"/>
</dbReference>
<dbReference type="SUPFAM" id="SSF46785">
    <property type="entry name" value="Winged helix' DNA-binding domain"/>
    <property type="match status" value="1"/>
</dbReference>
<dbReference type="PROSITE" id="PS50944">
    <property type="entry name" value="HTH_DTXR"/>
    <property type="match status" value="1"/>
</dbReference>
<feature type="chain" id="PRO_0000223184" description="Diphtheria toxin repressor">
    <location>
        <begin position="1"/>
        <end position="228"/>
    </location>
</feature>
<feature type="domain" description="HTH dtxR-type" evidence="2">
    <location>
        <begin position="4"/>
        <end position="65"/>
    </location>
</feature>
<feature type="sequence variant" description="In strain: ATCC 13869.">
    <original>KH</original>
    <variation>ND</variation>
    <location>
        <begin position="78"/>
        <end position="79"/>
    </location>
</feature>
<accession>Q8NP95</accession>
<accession>Q46067</accession>
<accession>Q6M4A1</accession>
<sequence length="228" mass="25485">MKDLVDTTEMYLRTIYELEEEGIVPLRARIAERLEQSGPTVSQTVARMERDGLVHVSPDRSLEMTPEGRSLAIAVMRKHRLAERLLTDIIGLDIHKVHDEACRWEHVMSDEVERRLVEVLDDVHRSPFGNPIPGLGEIGLDQADEPDSGVRAIDLPLGENLKARIVQLNEILQVDLEQFQALTDAGVEIGTEVDIINEQGRVVITHNGSSVELIDDLAHAVRVEKVEG</sequence>
<name>DTXR_CORGL</name>